<feature type="chain" id="PRO_0000455113" description="Doublecortin domain-containing protein">
    <location>
        <begin position="1"/>
        <end position="238"/>
    </location>
</feature>
<feature type="domain" description="Doublecortin" evidence="2">
    <location>
        <begin position="151"/>
        <end position="232"/>
    </location>
</feature>
<feature type="region of interest" description="Partial p25alpha domain" evidence="1">
    <location>
        <begin position="82"/>
        <end position="112"/>
    </location>
</feature>
<gene>
    <name evidence="1" type="primary">DCX</name>
    <name evidence="7" type="ORF">PF3D7_0517800</name>
</gene>
<protein>
    <recommendedName>
        <fullName evidence="1">Doublecortin domain-containing protein</fullName>
    </recommendedName>
    <alternativeName>
        <fullName evidence="5">PfApicortin</fullName>
    </alternativeName>
</protein>
<organism evidence="8">
    <name type="scientific">Plasmodium falciparum (isolate 3D7)</name>
    <dbReference type="NCBI Taxonomy" id="36329"/>
    <lineage>
        <taxon>Eukaryota</taxon>
        <taxon>Sar</taxon>
        <taxon>Alveolata</taxon>
        <taxon>Apicomplexa</taxon>
        <taxon>Aconoidasida</taxon>
        <taxon>Haemosporida</taxon>
        <taxon>Plasmodiidae</taxon>
        <taxon>Plasmodium</taxon>
        <taxon>Plasmodium (Laverania)</taxon>
    </lineage>
</organism>
<name>DCXH_PLAF7</name>
<evidence type="ECO:0000250" key="1">
    <source>
        <dbReference type="UniProtKB" id="B6KAS6"/>
    </source>
</evidence>
<evidence type="ECO:0000255" key="2">
    <source>
        <dbReference type="PROSITE-ProRule" id="PRU00072"/>
    </source>
</evidence>
<evidence type="ECO:0000269" key="3">
    <source>
    </source>
</evidence>
<evidence type="ECO:0000269" key="4">
    <source>
    </source>
</evidence>
<evidence type="ECO:0000303" key="5">
    <source>
    </source>
</evidence>
<evidence type="ECO:0000305" key="6"/>
<evidence type="ECO:0000312" key="7">
    <source>
        <dbReference type="EMBL" id="CAX63966.1"/>
    </source>
</evidence>
<evidence type="ECO:0000312" key="8">
    <source>
        <dbReference type="Proteomes" id="UP000001450"/>
    </source>
</evidence>
<proteinExistence type="evidence at protein level"/>
<dbReference type="EMBL" id="AL844504">
    <property type="protein sequence ID" value="CAX63966.1"/>
    <property type="molecule type" value="Genomic_DNA"/>
</dbReference>
<dbReference type="RefSeq" id="XP_002808695.1">
    <property type="nucleotide sequence ID" value="XM_002808649.1"/>
</dbReference>
<dbReference type="SMR" id="C0H4E4"/>
<dbReference type="STRING" id="36329.C0H4E4"/>
<dbReference type="PaxDb" id="5833-PFE0890c"/>
<dbReference type="EnsemblProtists" id="CAX63966">
    <property type="protein sequence ID" value="CAX63966"/>
    <property type="gene ID" value="PF3D7_0517800"/>
</dbReference>
<dbReference type="GeneID" id="812993"/>
<dbReference type="KEGG" id="pfa:PF3D7_0517800"/>
<dbReference type="VEuPathDB" id="PlasmoDB:PF3D7_0517800"/>
<dbReference type="HOGENOM" id="CLU_1167860_0_0_1"/>
<dbReference type="InParanoid" id="C0H4E4"/>
<dbReference type="OMA" id="FRNGDEH"/>
<dbReference type="OrthoDB" id="548799at2759"/>
<dbReference type="PhylomeDB" id="C0H4E4"/>
<dbReference type="Proteomes" id="UP000001450">
    <property type="component" value="Chromosome 5"/>
</dbReference>
<dbReference type="GO" id="GO:0005737">
    <property type="term" value="C:cytoplasm"/>
    <property type="evidence" value="ECO:0007669"/>
    <property type="project" value="UniProtKB-SubCell"/>
</dbReference>
<dbReference type="GO" id="GO:0005856">
    <property type="term" value="C:cytoskeleton"/>
    <property type="evidence" value="ECO:0007669"/>
    <property type="project" value="UniProtKB-SubCell"/>
</dbReference>
<dbReference type="GO" id="GO:0035556">
    <property type="term" value="P:intracellular signal transduction"/>
    <property type="evidence" value="ECO:0007669"/>
    <property type="project" value="InterPro"/>
</dbReference>
<dbReference type="CDD" id="cd01617">
    <property type="entry name" value="DCX"/>
    <property type="match status" value="1"/>
</dbReference>
<dbReference type="Gene3D" id="3.10.20.230">
    <property type="entry name" value="Doublecortin domain"/>
    <property type="match status" value="1"/>
</dbReference>
<dbReference type="InterPro" id="IPR003533">
    <property type="entry name" value="Doublecortin_dom"/>
</dbReference>
<dbReference type="InterPro" id="IPR036572">
    <property type="entry name" value="Doublecortin_dom_sf"/>
</dbReference>
<dbReference type="InterPro" id="IPR011057">
    <property type="entry name" value="Mss4-like_sf"/>
</dbReference>
<dbReference type="Pfam" id="PF03607">
    <property type="entry name" value="DCX"/>
    <property type="match status" value="1"/>
</dbReference>
<dbReference type="SUPFAM" id="SSF89837">
    <property type="entry name" value="Doublecortin (DC)"/>
    <property type="match status" value="1"/>
</dbReference>
<dbReference type="SUPFAM" id="SSF51316">
    <property type="entry name" value="Mss4-like"/>
    <property type="match status" value="1"/>
</dbReference>
<dbReference type="PROSITE" id="PS50309">
    <property type="entry name" value="DC"/>
    <property type="match status" value="1"/>
</dbReference>
<keyword id="KW-0963">Cytoplasm</keyword>
<keyword id="KW-0206">Cytoskeleton</keyword>
<keyword id="KW-1185">Reference proteome</keyword>
<sequence>MENFDEVIKEYQKYLEGKEKTHKINSCKHPCCEEDNLKSVKNYFKVYHKKYIPSIIQKKKKERNEHAPPLLKDIQDKRCTNVFERLNDKQFYTGVQKTKFMELLKNNKNKSSYCYNNIKVFSTMLKKPCNYVVTPGTLGIQKYGIQTGRPKTIFLFNNEKKYDKGVYFLVKSYIKNIKSLCYEITKILQPSIGPTRKIYDQNFSLVRNVNDLINGGKYLCTSGDPPAPIRNLSLHFLT</sequence>
<reference evidence="8" key="1">
    <citation type="journal article" date="2002" name="Nature">
        <title>Genome sequence of the human malaria parasite Plasmodium falciparum.</title>
        <authorList>
            <person name="Gardner M.J."/>
            <person name="Hall N."/>
            <person name="Fung E."/>
            <person name="White O."/>
            <person name="Berriman M."/>
            <person name="Hyman R.W."/>
            <person name="Carlton J.M."/>
            <person name="Pain A."/>
            <person name="Nelson K.E."/>
            <person name="Bowman S."/>
            <person name="Paulsen I.T."/>
            <person name="James K.D."/>
            <person name="Eisen J.A."/>
            <person name="Rutherford K.M."/>
            <person name="Salzberg S.L."/>
            <person name="Craig A."/>
            <person name="Kyes S."/>
            <person name="Chan M.-S."/>
            <person name="Nene V."/>
            <person name="Shallom S.J."/>
            <person name="Suh B."/>
            <person name="Peterson J."/>
            <person name="Angiuoli S."/>
            <person name="Pertea M."/>
            <person name="Allen J."/>
            <person name="Selengut J."/>
            <person name="Haft D."/>
            <person name="Mather M.W."/>
            <person name="Vaidya A.B."/>
            <person name="Martin D.M.A."/>
            <person name="Fairlamb A.H."/>
            <person name="Fraunholz M.J."/>
            <person name="Roos D.S."/>
            <person name="Ralph S.A."/>
            <person name="McFadden G.I."/>
            <person name="Cummings L.M."/>
            <person name="Subramanian G.M."/>
            <person name="Mungall C."/>
            <person name="Venter J.C."/>
            <person name="Carucci D.J."/>
            <person name="Hoffman S.L."/>
            <person name="Newbold C."/>
            <person name="Davis R.W."/>
            <person name="Fraser C.M."/>
            <person name="Barrell B.G."/>
        </authorList>
    </citation>
    <scope>NUCLEOTIDE SEQUENCE [LARGE SCALE GENOMIC DNA]</scope>
    <source>
        <strain evidence="8">3D7</strain>
    </source>
</reference>
<reference evidence="8" key="2">
    <citation type="journal article" date="2002" name="Nature">
        <title>Sequence of Plasmodium falciparum chromosomes 1, 3-9 and 13.</title>
        <authorList>
            <person name="Hall N."/>
            <person name="Pain A."/>
            <person name="Berriman M."/>
            <person name="Churcher C.M."/>
            <person name="Harris B."/>
            <person name="Harris D."/>
            <person name="Mungall K.L."/>
            <person name="Bowman S."/>
            <person name="Atkin R."/>
            <person name="Baker S."/>
            <person name="Barron A."/>
            <person name="Brooks K."/>
            <person name="Buckee C.O."/>
            <person name="Burrows C."/>
            <person name="Cherevach I."/>
            <person name="Chillingworth C."/>
            <person name="Chillingworth T."/>
            <person name="Christodoulou Z."/>
            <person name="Clark L."/>
            <person name="Clark R."/>
            <person name="Corton C."/>
            <person name="Cronin A."/>
            <person name="Davies R.M."/>
            <person name="Davis P."/>
            <person name="Dear P."/>
            <person name="Dearden F."/>
            <person name="Doggett J."/>
            <person name="Feltwell T."/>
            <person name="Goble A."/>
            <person name="Goodhead I."/>
            <person name="Gwilliam R."/>
            <person name="Hamlin N."/>
            <person name="Hance Z."/>
            <person name="Harper D."/>
            <person name="Hauser H."/>
            <person name="Hornsby T."/>
            <person name="Holroyd S."/>
            <person name="Horrocks P."/>
            <person name="Humphray S."/>
            <person name="Jagels K."/>
            <person name="James K.D."/>
            <person name="Johnson D."/>
            <person name="Kerhornou A."/>
            <person name="Knights A."/>
            <person name="Konfortov B."/>
            <person name="Kyes S."/>
            <person name="Larke N."/>
            <person name="Lawson D."/>
            <person name="Lennard N."/>
            <person name="Line A."/>
            <person name="Maddison M."/>
            <person name="Mclean J."/>
            <person name="Mooney P."/>
            <person name="Moule S."/>
            <person name="Murphy L."/>
            <person name="Oliver K."/>
            <person name="Ormond D."/>
            <person name="Price C."/>
            <person name="Quail M.A."/>
            <person name="Rabbinowitsch E."/>
            <person name="Rajandream M.A."/>
            <person name="Rutter S."/>
            <person name="Rutherford K.M."/>
            <person name="Sanders M."/>
            <person name="Simmonds M."/>
            <person name="Seeger K."/>
            <person name="Sharp S."/>
            <person name="Smith R."/>
            <person name="Squares R."/>
            <person name="Squares S."/>
            <person name="Stevens K."/>
            <person name="Taylor K."/>
            <person name="Tivey A."/>
            <person name="Unwin L."/>
            <person name="Whitehead S."/>
            <person name="Woodward J.R."/>
            <person name="Sulston J.E."/>
            <person name="Craig A."/>
            <person name="Newbold C."/>
            <person name="Barrell B.G."/>
        </authorList>
    </citation>
    <scope>NUCLEOTIDE SEQUENCE [LARGE SCALE GENOMIC DNA]</scope>
    <source>
        <strain evidence="8">3D7</strain>
    </source>
</reference>
<reference evidence="6" key="3">
    <citation type="journal article" date="2020" name="Dis. Model. Mech.">
        <title>Targeted repression of Plasmodium apicortin by host microRNA impairs malaria parasite growth and invasion.</title>
        <authorList>
            <person name="Chakrabarti M."/>
            <person name="Garg S."/>
            <person name="Rajagopal A."/>
            <person name="Pati S."/>
            <person name="Singh S."/>
        </authorList>
    </citation>
    <scope>SUBCELLULAR LOCATION</scope>
    <scope>DEVELOPMENTAL STAGE</scope>
    <scope>BIOTECHNOLOGY</scope>
</reference>
<reference evidence="6" key="4">
    <citation type="journal article" date="2021" name="Sci. Rep.">
        <title>Interaction of Plasmodium falciparum apicortin with alpha- and beta-tubulin is critical for parasite growth and survival.</title>
        <authorList>
            <person name="Chakrabarti M."/>
            <person name="Joshi N."/>
            <person name="Kumari G."/>
            <person name="Singh P."/>
            <person name="Shoaib R."/>
            <person name="Munjal A."/>
            <person name="Kumar V."/>
            <person name="Behl A."/>
            <person name="Abid M."/>
            <person name="Garg S."/>
            <person name="Gupta S."/>
            <person name="Singh S."/>
        </authorList>
    </citation>
    <scope>FUNCTION</scope>
    <scope>INTERACTION WITH ALPHA-TUBULIN 1 AND BETA-TUBULIN</scope>
    <scope>SUBCELLULAR LOCATION</scope>
    <scope>DEVELOPMENTAL STAGE</scope>
</reference>
<comment type="function">
    <text evidence="3 4">Involved in the stabilization of microtubules (PubMed:33633135). Probably by controlling microtubules stabilization, plays a role in invasion, microneme secretion and parasite growth in host erythrocytes (PubMed:32493727).</text>
</comment>
<comment type="subunit">
    <text evidence="4">Interacts with alpha-tubulin 1 and beta-tubulin; the interaction stabilizes microtubule assembly.</text>
</comment>
<comment type="subcellular location">
    <subcellularLocation>
        <location evidence="4">Cytoplasm</location>
    </subcellularLocation>
    <subcellularLocation>
        <location evidence="4">Cytoplasm</location>
        <location evidence="4">Cytoskeleton</location>
    </subcellularLocation>
    <text evidence="4">Localizes to the parasite surface in subpellicular regions in trophozoites and schizonts (PubMed:33633135). In merozoites, localizes to the apical end of the parasite (PubMed:33633135).</text>
</comment>
<comment type="developmental stage">
    <text evidence="3 4">Expressed during the parasite blood stage, including in rings, trophozoites, schizonts and free merozoites (at protein level).</text>
</comment>
<comment type="domain">
    <text evidence="1">The doublecortin is involved in the binding to microtubules; however, it is not sufficient by itself and requires the partial p25alpha domain.</text>
</comment>
<comment type="domain">
    <text evidence="1">The partial p25 alpha domain binds to microtubules.</text>
</comment>
<comment type="biotechnology">
    <text evidence="3">Human microRNA candidate miR-197 and to a lesser extent miR150 causes the down-regulation of apicortin and thus may be a possible candidate for nucleotide-based antimalarial treatment.</text>
</comment>
<comment type="miscellaneous">
    <text evidence="4">Tamoxifen used to treat breast cancer blocks the interaction between DCX/apicortin and, alpha-tubulin 1 and beta-tubulin resulting in microtubule destabilization.</text>
</comment>
<accession>C0H4E4</accession>